<sequence length="71" mass="7829">MARITVEDCLKRIPNRFQLTLAATYRARQLTAGGTPQIELDPHDKDKPTVIALREVAAGKVGLEMLNRGQA</sequence>
<dbReference type="EC" id="2.7.7.6" evidence="1"/>
<dbReference type="EMBL" id="AM406670">
    <property type="protein sequence ID" value="CAL96568.1"/>
    <property type="molecule type" value="Genomic_DNA"/>
</dbReference>
<dbReference type="RefSeq" id="WP_011767674.1">
    <property type="nucleotide sequence ID" value="NC_008702.1"/>
</dbReference>
<dbReference type="SMR" id="A1KCL2"/>
<dbReference type="STRING" id="62928.azo3952"/>
<dbReference type="KEGG" id="aoa:dqs_4095"/>
<dbReference type="KEGG" id="azo:azo3952"/>
<dbReference type="eggNOG" id="COG1758">
    <property type="taxonomic scope" value="Bacteria"/>
</dbReference>
<dbReference type="HOGENOM" id="CLU_125406_5_2_4"/>
<dbReference type="OrthoDB" id="9796300at2"/>
<dbReference type="Proteomes" id="UP000002588">
    <property type="component" value="Chromosome"/>
</dbReference>
<dbReference type="GO" id="GO:0000428">
    <property type="term" value="C:DNA-directed RNA polymerase complex"/>
    <property type="evidence" value="ECO:0007669"/>
    <property type="project" value="UniProtKB-KW"/>
</dbReference>
<dbReference type="GO" id="GO:0003677">
    <property type="term" value="F:DNA binding"/>
    <property type="evidence" value="ECO:0007669"/>
    <property type="project" value="UniProtKB-UniRule"/>
</dbReference>
<dbReference type="GO" id="GO:0003899">
    <property type="term" value="F:DNA-directed RNA polymerase activity"/>
    <property type="evidence" value="ECO:0007669"/>
    <property type="project" value="UniProtKB-UniRule"/>
</dbReference>
<dbReference type="GO" id="GO:0006351">
    <property type="term" value="P:DNA-templated transcription"/>
    <property type="evidence" value="ECO:0007669"/>
    <property type="project" value="UniProtKB-UniRule"/>
</dbReference>
<dbReference type="Gene3D" id="3.90.940.10">
    <property type="match status" value="1"/>
</dbReference>
<dbReference type="HAMAP" id="MF_00366">
    <property type="entry name" value="RNApol_bact_RpoZ"/>
    <property type="match status" value="1"/>
</dbReference>
<dbReference type="InterPro" id="IPR003716">
    <property type="entry name" value="DNA-dir_RNA_pol_omega"/>
</dbReference>
<dbReference type="InterPro" id="IPR006110">
    <property type="entry name" value="Pol_omega/Rpo6/RPB6"/>
</dbReference>
<dbReference type="InterPro" id="IPR036161">
    <property type="entry name" value="RPB6/omega-like_sf"/>
</dbReference>
<dbReference type="NCBIfam" id="TIGR00690">
    <property type="entry name" value="rpoZ"/>
    <property type="match status" value="1"/>
</dbReference>
<dbReference type="PANTHER" id="PTHR34476">
    <property type="entry name" value="DNA-DIRECTED RNA POLYMERASE SUBUNIT OMEGA"/>
    <property type="match status" value="1"/>
</dbReference>
<dbReference type="PANTHER" id="PTHR34476:SF1">
    <property type="entry name" value="DNA-DIRECTED RNA POLYMERASE SUBUNIT OMEGA"/>
    <property type="match status" value="1"/>
</dbReference>
<dbReference type="Pfam" id="PF01192">
    <property type="entry name" value="RNA_pol_Rpb6"/>
    <property type="match status" value="1"/>
</dbReference>
<dbReference type="SMART" id="SM01409">
    <property type="entry name" value="RNA_pol_Rpb6"/>
    <property type="match status" value="1"/>
</dbReference>
<dbReference type="SUPFAM" id="SSF63562">
    <property type="entry name" value="RPB6/omega subunit-like"/>
    <property type="match status" value="1"/>
</dbReference>
<gene>
    <name evidence="1" type="primary">rpoZ</name>
    <name type="ordered locus">azo3952</name>
</gene>
<keyword id="KW-0240">DNA-directed RNA polymerase</keyword>
<keyword id="KW-0548">Nucleotidyltransferase</keyword>
<keyword id="KW-1185">Reference proteome</keyword>
<keyword id="KW-0804">Transcription</keyword>
<keyword id="KW-0808">Transferase</keyword>
<organism>
    <name type="scientific">Azoarcus sp. (strain BH72)</name>
    <dbReference type="NCBI Taxonomy" id="418699"/>
    <lineage>
        <taxon>Bacteria</taxon>
        <taxon>Pseudomonadati</taxon>
        <taxon>Pseudomonadota</taxon>
        <taxon>Betaproteobacteria</taxon>
        <taxon>Rhodocyclales</taxon>
        <taxon>Zoogloeaceae</taxon>
        <taxon>Azoarcus</taxon>
    </lineage>
</organism>
<proteinExistence type="inferred from homology"/>
<accession>A1KCL2</accession>
<name>RPOZ_AZOSB</name>
<evidence type="ECO:0000255" key="1">
    <source>
        <dbReference type="HAMAP-Rule" id="MF_00366"/>
    </source>
</evidence>
<reference key="1">
    <citation type="journal article" date="2006" name="Nat. Biotechnol.">
        <title>Complete genome of the mutualistic, N2-fixing grass endophyte Azoarcus sp. strain BH72.</title>
        <authorList>
            <person name="Krause A."/>
            <person name="Ramakumar A."/>
            <person name="Bartels D."/>
            <person name="Battistoni F."/>
            <person name="Bekel T."/>
            <person name="Boch J."/>
            <person name="Boehm M."/>
            <person name="Friedrich F."/>
            <person name="Hurek T."/>
            <person name="Krause L."/>
            <person name="Linke B."/>
            <person name="McHardy A.C."/>
            <person name="Sarkar A."/>
            <person name="Schneiker S."/>
            <person name="Syed A.A."/>
            <person name="Thauer R."/>
            <person name="Vorhoelter F.-J."/>
            <person name="Weidner S."/>
            <person name="Puehler A."/>
            <person name="Reinhold-Hurek B."/>
            <person name="Kaiser O."/>
            <person name="Goesmann A."/>
        </authorList>
    </citation>
    <scope>NUCLEOTIDE SEQUENCE [LARGE SCALE GENOMIC DNA]</scope>
    <source>
        <strain>BH72</strain>
    </source>
</reference>
<feature type="chain" id="PRO_1000005887" description="DNA-directed RNA polymerase subunit omega">
    <location>
        <begin position="1"/>
        <end position="71"/>
    </location>
</feature>
<protein>
    <recommendedName>
        <fullName evidence="1">DNA-directed RNA polymerase subunit omega</fullName>
        <shortName evidence="1">RNAP omega subunit</shortName>
        <ecNumber evidence="1">2.7.7.6</ecNumber>
    </recommendedName>
    <alternativeName>
        <fullName evidence="1">RNA polymerase omega subunit</fullName>
    </alternativeName>
    <alternativeName>
        <fullName evidence="1">Transcriptase subunit omega</fullName>
    </alternativeName>
</protein>
<comment type="function">
    <text evidence="1">Promotes RNA polymerase assembly. Latches the N- and C-terminal regions of the beta' subunit thereby facilitating its interaction with the beta and alpha subunits.</text>
</comment>
<comment type="catalytic activity">
    <reaction evidence="1">
        <text>RNA(n) + a ribonucleoside 5'-triphosphate = RNA(n+1) + diphosphate</text>
        <dbReference type="Rhea" id="RHEA:21248"/>
        <dbReference type="Rhea" id="RHEA-COMP:14527"/>
        <dbReference type="Rhea" id="RHEA-COMP:17342"/>
        <dbReference type="ChEBI" id="CHEBI:33019"/>
        <dbReference type="ChEBI" id="CHEBI:61557"/>
        <dbReference type="ChEBI" id="CHEBI:140395"/>
        <dbReference type="EC" id="2.7.7.6"/>
    </reaction>
</comment>
<comment type="subunit">
    <text evidence="1">The RNAP catalytic core consists of 2 alpha, 1 beta, 1 beta' and 1 omega subunit. When a sigma factor is associated with the core the holoenzyme is formed, which can initiate transcription.</text>
</comment>
<comment type="similarity">
    <text evidence="1">Belongs to the RNA polymerase subunit omega family.</text>
</comment>